<dbReference type="EMBL" id="AC011330">
    <property type="status" value="NOT_ANNOTATED_CDS"/>
    <property type="molecule type" value="Genomic_DNA"/>
</dbReference>
<dbReference type="EMBL" id="BK000138">
    <property type="protein sequence ID" value="DAA00085.1"/>
    <property type="molecule type" value="mRNA"/>
</dbReference>
<dbReference type="CCDS" id="CCDS10098.1"/>
<dbReference type="RefSeq" id="NP_714544.1">
    <property type="nucleotide sequence ID" value="NM_153700.2"/>
</dbReference>
<dbReference type="RefSeq" id="XP_016877448.1">
    <property type="nucleotide sequence ID" value="XM_017021959.1"/>
</dbReference>
<dbReference type="BioGRID" id="127793">
    <property type="interactions" value="1"/>
</dbReference>
<dbReference type="FunCoup" id="Q7RTU9">
    <property type="interactions" value="2"/>
</dbReference>
<dbReference type="STRING" id="9606.ENSP00000401513"/>
<dbReference type="TCDB" id="8.A.186.1.1">
    <property type="family name" value="the stereocilin, strc, protein (strc) family"/>
</dbReference>
<dbReference type="GlyCosmos" id="Q7RTU9">
    <property type="glycosylation" value="14 sites, No reported glycans"/>
</dbReference>
<dbReference type="GlyGen" id="Q7RTU9">
    <property type="glycosylation" value="19 sites"/>
</dbReference>
<dbReference type="iPTMnet" id="Q7RTU9"/>
<dbReference type="PhosphoSitePlus" id="Q7RTU9"/>
<dbReference type="BioMuta" id="STRC"/>
<dbReference type="DMDM" id="47606114"/>
<dbReference type="MassIVE" id="Q7RTU9"/>
<dbReference type="PaxDb" id="9606-ENSP00000401513"/>
<dbReference type="PeptideAtlas" id="Q7RTU9"/>
<dbReference type="ProteomicsDB" id="68910"/>
<dbReference type="Antibodypedia" id="56334">
    <property type="antibodies" value="13 antibodies from 7 providers"/>
</dbReference>
<dbReference type="DNASU" id="161497"/>
<dbReference type="Ensembl" id="ENST00000450892.7">
    <property type="protein sequence ID" value="ENSP00000401513.2"/>
    <property type="gene ID" value="ENSG00000242866.10"/>
</dbReference>
<dbReference type="GeneID" id="161497"/>
<dbReference type="KEGG" id="hsa:161497"/>
<dbReference type="MANE-Select" id="ENST00000450892.7">
    <property type="protein sequence ID" value="ENSP00000401513.2"/>
    <property type="RefSeq nucleotide sequence ID" value="NM_153700.2"/>
    <property type="RefSeq protein sequence ID" value="NP_714544.1"/>
</dbReference>
<dbReference type="UCSC" id="uc001zsf.4">
    <property type="organism name" value="human"/>
</dbReference>
<dbReference type="AGR" id="HGNC:16035"/>
<dbReference type="CTD" id="161497"/>
<dbReference type="DisGeNET" id="161497"/>
<dbReference type="GeneCards" id="STRC"/>
<dbReference type="GeneReviews" id="STRC"/>
<dbReference type="HGNC" id="HGNC:16035">
    <property type="gene designation" value="STRC"/>
</dbReference>
<dbReference type="HPA" id="ENSG00000242866">
    <property type="expression patterns" value="Tissue enriched (brain)"/>
</dbReference>
<dbReference type="MalaCards" id="STRC"/>
<dbReference type="MIM" id="603720">
    <property type="type" value="phenotype"/>
</dbReference>
<dbReference type="MIM" id="606440">
    <property type="type" value="gene"/>
</dbReference>
<dbReference type="MIM" id="611102">
    <property type="type" value="phenotype"/>
</dbReference>
<dbReference type="neXtProt" id="NX_Q7RTU9"/>
<dbReference type="OpenTargets" id="ENSG00000242866"/>
<dbReference type="Orphanet" id="94064">
    <property type="disease" value="Deafness-infertility syndrome"/>
</dbReference>
<dbReference type="Orphanet" id="90636">
    <property type="disease" value="Rare autosomal recessive non-syndromic sensorineural deafness type DFNB"/>
</dbReference>
<dbReference type="PharmGKB" id="PA38082"/>
<dbReference type="VEuPathDB" id="HostDB:ENSG00000242866"/>
<dbReference type="eggNOG" id="ENOG502QTHC">
    <property type="taxonomic scope" value="Eukaryota"/>
</dbReference>
<dbReference type="GeneTree" id="ENSGT00950000182957"/>
<dbReference type="HOGENOM" id="CLU_001286_0_0_1"/>
<dbReference type="InParanoid" id="Q7RTU9"/>
<dbReference type="OMA" id="LKLPHYK"/>
<dbReference type="OrthoDB" id="9447519at2759"/>
<dbReference type="PAN-GO" id="Q7RTU9">
    <property type="GO annotations" value="4 GO annotations based on evolutionary models"/>
</dbReference>
<dbReference type="PhylomeDB" id="Q7RTU9"/>
<dbReference type="TreeFam" id="TF330914"/>
<dbReference type="PathwayCommons" id="Q7RTU9"/>
<dbReference type="Reactome" id="R-HSA-9662360">
    <property type="pathway name" value="Sensory processing of sound by inner hair cells of the cochlea"/>
</dbReference>
<dbReference type="Reactome" id="R-HSA-9662361">
    <property type="pathway name" value="Sensory processing of sound by outer hair cells of the cochlea"/>
</dbReference>
<dbReference type="SignaLink" id="Q7RTU9"/>
<dbReference type="BioGRID-ORCS" id="161497">
    <property type="hits" value="17 hits in 1098 CRISPR screens"/>
</dbReference>
<dbReference type="GeneWiki" id="STRC"/>
<dbReference type="GenomeRNAi" id="161497"/>
<dbReference type="Pharos" id="Q7RTU9">
    <property type="development level" value="Tbio"/>
</dbReference>
<dbReference type="PRO" id="PR:Q7RTU9"/>
<dbReference type="Proteomes" id="UP000005640">
    <property type="component" value="Chromosome 15"/>
</dbReference>
<dbReference type="RNAct" id="Q7RTU9">
    <property type="molecule type" value="protein"/>
</dbReference>
<dbReference type="Bgee" id="ENSG00000242866">
    <property type="expression patterns" value="Expressed in right hemisphere of cerebellum and 114 other cell types or tissues"/>
</dbReference>
<dbReference type="ExpressionAtlas" id="Q7RTU9">
    <property type="expression patterns" value="baseline and differential"/>
</dbReference>
<dbReference type="GO" id="GO:0009986">
    <property type="term" value="C:cell surface"/>
    <property type="evidence" value="ECO:0000318"/>
    <property type="project" value="GO_Central"/>
</dbReference>
<dbReference type="GO" id="GO:0060091">
    <property type="term" value="C:kinocilium"/>
    <property type="evidence" value="ECO:0000250"/>
    <property type="project" value="UniProtKB"/>
</dbReference>
<dbReference type="GO" id="GO:0032426">
    <property type="term" value="C:stereocilium tip"/>
    <property type="evidence" value="ECO:0000250"/>
    <property type="project" value="UniProtKB"/>
</dbReference>
<dbReference type="GO" id="GO:0060088">
    <property type="term" value="P:auditory receptor cell stereocilium organization"/>
    <property type="evidence" value="ECO:0000250"/>
    <property type="project" value="UniProtKB"/>
</dbReference>
<dbReference type="GO" id="GO:0007160">
    <property type="term" value="P:cell-matrix adhesion"/>
    <property type="evidence" value="ECO:0000318"/>
    <property type="project" value="GO_Central"/>
</dbReference>
<dbReference type="GO" id="GO:0050910">
    <property type="term" value="P:detection of mechanical stimulus involved in sensory perception of sound"/>
    <property type="evidence" value="ECO:0007669"/>
    <property type="project" value="Ensembl"/>
</dbReference>
<dbReference type="GO" id="GO:0008104">
    <property type="term" value="P:protein localization"/>
    <property type="evidence" value="ECO:0007669"/>
    <property type="project" value="Ensembl"/>
</dbReference>
<dbReference type="InterPro" id="IPR026664">
    <property type="entry name" value="Stereocilin-rel"/>
</dbReference>
<dbReference type="InterPro" id="IPR048992">
    <property type="entry name" value="Stereocilin_LRR"/>
</dbReference>
<dbReference type="PANTHER" id="PTHR23412">
    <property type="entry name" value="STEREOCILIN RELATED"/>
    <property type="match status" value="1"/>
</dbReference>
<dbReference type="PANTHER" id="PTHR23412:SF14">
    <property type="entry name" value="STEREOCILIN-RELATED"/>
    <property type="match status" value="1"/>
</dbReference>
<dbReference type="Pfam" id="PF21058">
    <property type="entry name" value="Stereocilin"/>
    <property type="match status" value="1"/>
</dbReference>
<keyword id="KW-0966">Cell projection</keyword>
<keyword id="KW-0969">Cilium</keyword>
<keyword id="KW-0209">Deafness</keyword>
<keyword id="KW-0325">Glycoprotein</keyword>
<keyword id="KW-1009">Hearing</keyword>
<keyword id="KW-1010">Non-syndromic deafness</keyword>
<keyword id="KW-1185">Reference proteome</keyword>
<keyword id="KW-0732">Signal</keyword>
<sequence>MALSLWPLLLLLLLLLLLSFAVTLAPTGPHSLDPGLSFLKSLLSTLDQAPQGSLSRSRFFTFLANISSSFEPGRMGEGPVGEPPPLQPPALRLHDFLVTLRGSPDWEPMLGLLGDMLALLGQEQTPRDFLVHQAGVLGGLVEVLLGALVPGGPPTPTRPPCTRDGPSDCVLAADWLPSLLLLLEGTRWQALVQVQPSVDPTNATGLDGREAAPHFLQGLLGLLTPTGELGSKEALWGGLLRTVGAPLYAAFQEGLLRVTHSLQDEVFSILGQPEPDTNGQCQGGNLQQLLLWGVRHNLSWDVQALGFLSGSPPPPPALLHCLSTGVPLPRASQPSAHISPRQRRAITVEALCENHLGPAPPYSISNFSIHLLCQHTKPATPQPHPSTTAICQTAVWYAVSWAPGAQGWLQACHDQFPDEFLDAICSNLSFSALSGSNRRLVKRLCAGLLPPPTSCPEGLPPVPLTPDIFWGCFLENETLWAERLCGEASLQAVPPSNQAWVQHVCQGPTPDVTASPPCHIGPCGERCPDGGSFLVMVCANDTMYEVLVPFWPWLAGQCRISRGGNDTCFLEGLLGPLLPSLPPLGPSPLCLTPGPFLLGMLSQLPRCQSSVPALAHPTRLHYLLRLLTFLLGPGAGGAEAQGMLGRALLLSSLPDNCSFWDAFRPEGRRSVLRTIGEYLEQDEEQPTPSGFEPTVNPSSGISKMELLACFSPVLWDLLQREKSVWALQILVQAYLHMPPENLQQLVLSAEREAAQGFLTLMLQGKLQGKLQVPPSEEQALGRLTALLLQRYPRLTSQLFIDLSPLIPFLAVSDLMRFPPSLLANDSVLAAIRDYSPGMRPEQKEALAKRLLAPELFGEVPAWPQELLWAVLPLLPHLPLENFLQLSPHQIQALEDSWPAAGLGPGHARHVLRSLVNQSVQDGEEQVRRLGPLACFLSPEELQSLVPLSDPTGPVERGLLECAANGTLSPEGRVAYELLGVLRSSGGAVLSPRELRVWAPLFSQLGLRFLQELSEPQLRAMLPVLQGTSVTPAQAVLLLGRLLPRHDLSLEELCSLHLLLPGLSPQTLQAIPRRVLVGACSCLAPELSRLSACQTAALLQTFRVKDGVKNMGTTGAGPAVCIPGQPIPTTWPDCLLPLLPLKLLQLDSLALLANRRRYWELPWSEQQAQFLWKKMQVPTNLTLRNLQALGTLAGGMSCEFLQQINSMVDFLEVVHMIYQLPTRVRGSLRACIWAELQRRMAMPEPEWTTVGPELNGLDSKLLLDLPIQLMDRLSNESIMLVVELVQRAPEQLLALTPLHQAALAERALQNLAPKETPVSGEVLETLGPLVGFLGTESTRQIPLQILLSHLSQLQGFCLGETFATELGWLLLQESVLGKPELWSQDEVEQAGRLVFTLSTEAISLIPREALGPETLERLLEKQQSWEQSRVGQLCREPQLAAKKAALVAGVVRPAAEDLPEPVPNCADVRGTFPAAWSATQIAEMELSDFEDCLTLFAGDPGLGPEELRAAMGKAKQLWGPPRGFRPEQILQLGRLLIGLGDRELQELILVDWGVLSTLGQIDGWSTTQLRIVVSSFLRQSGRHVSHLDFVHLTALGYTLCGLRPEELQHISSWEFSQAALFLGTLHLQCSEEQLEVLAHLLVLPGGFGPISNWGPEIFTEIGTIAAGIPDLALSALLRGQIQGVTPLAISVIPPPKFAVVFSPIQLSSLTSAQAVAVTPEQMAFLSPEQRRAVAWAQHEGKESPEQQGRSTAWGLQDWSRPSWSLVLTISFLGHLL</sequence>
<gene>
    <name type="primary">STRC</name>
</gene>
<feature type="signal peptide" evidence="2">
    <location>
        <begin position="1"/>
        <end position="22"/>
    </location>
</feature>
<feature type="chain" id="PRO_0000022426" description="Stereocilin">
    <location>
        <begin position="23"/>
        <end position="1775"/>
    </location>
</feature>
<feature type="glycosylation site" description="N-linked (GlcNAc...) asparagine" evidence="2">
    <location>
        <position position="65"/>
    </location>
</feature>
<feature type="glycosylation site" description="N-linked (GlcNAc...) asparagine" evidence="2">
    <location>
        <position position="202"/>
    </location>
</feature>
<feature type="glycosylation site" description="N-linked (GlcNAc...) asparagine" evidence="2">
    <location>
        <position position="297"/>
    </location>
</feature>
<feature type="glycosylation site" description="N-linked (GlcNAc...) asparagine" evidence="2">
    <location>
        <position position="366"/>
    </location>
</feature>
<feature type="glycosylation site" description="N-linked (GlcNAc...) asparagine" evidence="2">
    <location>
        <position position="427"/>
    </location>
</feature>
<feature type="glycosylation site" description="N-linked (GlcNAc...) asparagine" evidence="2">
    <location>
        <position position="476"/>
    </location>
</feature>
<feature type="glycosylation site" description="N-linked (GlcNAc...) asparagine" evidence="2">
    <location>
        <position position="540"/>
    </location>
</feature>
<feature type="glycosylation site" description="N-linked (GlcNAc...) asparagine" evidence="2">
    <location>
        <position position="565"/>
    </location>
</feature>
<feature type="glycosylation site" description="N-linked (GlcNAc...) asparagine" evidence="2">
    <location>
        <position position="656"/>
    </location>
</feature>
<feature type="glycosylation site" description="N-linked (GlcNAc...) asparagine" evidence="2">
    <location>
        <position position="824"/>
    </location>
</feature>
<feature type="glycosylation site" description="N-linked (GlcNAc...) asparagine" evidence="2">
    <location>
        <position position="916"/>
    </location>
</feature>
<feature type="glycosylation site" description="N-linked (GlcNAc...) asparagine" evidence="2">
    <location>
        <position position="964"/>
    </location>
</feature>
<feature type="glycosylation site" description="N-linked (GlcNAc...) asparagine" evidence="2">
    <location>
        <position position="1179"/>
    </location>
</feature>
<feature type="glycosylation site" description="N-linked (GlcNAc...) asparagine" evidence="2">
    <location>
        <position position="1274"/>
    </location>
</feature>
<feature type="sequence variant" id="VAR_051389" description="In dbSNP:rs2920791.">
    <original>L</original>
    <variation>F</variation>
    <location>
        <position position="1640"/>
    </location>
</feature>
<organism>
    <name type="scientific">Homo sapiens</name>
    <name type="common">Human</name>
    <dbReference type="NCBI Taxonomy" id="9606"/>
    <lineage>
        <taxon>Eukaryota</taxon>
        <taxon>Metazoa</taxon>
        <taxon>Chordata</taxon>
        <taxon>Craniata</taxon>
        <taxon>Vertebrata</taxon>
        <taxon>Euteleostomi</taxon>
        <taxon>Mammalia</taxon>
        <taxon>Eutheria</taxon>
        <taxon>Euarchontoglires</taxon>
        <taxon>Primates</taxon>
        <taxon>Haplorrhini</taxon>
        <taxon>Catarrhini</taxon>
        <taxon>Hominidae</taxon>
        <taxon>Homo</taxon>
    </lineage>
</organism>
<comment type="function">
    <text evidence="1">Essential to the formation of horizontal top connectors between outer hair cell stereocilia.</text>
</comment>
<comment type="subcellular location">
    <subcellularLocation>
        <location evidence="1">Cell surface</location>
    </subcellularLocation>
    <subcellularLocation>
        <location evidence="1">Cell projection</location>
        <location evidence="1">Kinocilium</location>
    </subcellularLocation>
    <subcellularLocation>
        <location evidence="1">Cell projection</location>
        <location evidence="1">Stereocilium</location>
    </subcellularLocation>
</comment>
<comment type="disease" evidence="3">
    <disease id="DI-00863">
        <name>Deafness, autosomal recessive, 16</name>
        <acronym>DFNB16</acronym>
        <description>A form of non-syndromic sensorineural hearing loss. Sensorineural deafness results from damage to the neural receptors of the inner ear, the nerve pathways to the brain, or the area of the brain that receives sound information.</description>
        <dbReference type="MIM" id="603720"/>
    </disease>
    <text>The disease is caused by variants affecting the gene represented in this entry.</text>
</comment>
<comment type="disease" evidence="4">
    <disease id="DI-01474">
        <name>Deafness-infertility syndrome</name>
        <acronym>DIS</acronym>
        <description>Characterized by deafness and infertility and is caused by large contiguous gene deletions at 15q15.3 that removes both STRC and CATSPER2 genes.</description>
        <dbReference type="MIM" id="611102"/>
    </disease>
    <text>The disease is caused by variants affecting the gene represented in this entry.</text>
</comment>
<comment type="similarity">
    <text evidence="5">Belongs to the stereocilin family.</text>
</comment>
<accession>Q7RTU9</accession>
<protein>
    <recommendedName>
        <fullName>Stereocilin</fullName>
    </recommendedName>
</protein>
<evidence type="ECO:0000250" key="1"/>
<evidence type="ECO:0000255" key="2"/>
<evidence type="ECO:0000269" key="3">
    <source>
    </source>
</evidence>
<evidence type="ECO:0000269" key="4">
    <source>
    </source>
</evidence>
<evidence type="ECO:0000305" key="5"/>
<reference key="1">
    <citation type="journal article" date="2006" name="Nature">
        <title>Analysis of the DNA sequence and duplication history of human chromosome 15.</title>
        <authorList>
            <person name="Zody M.C."/>
            <person name="Garber M."/>
            <person name="Sharpe T."/>
            <person name="Young S.K."/>
            <person name="Rowen L."/>
            <person name="O'Neill K."/>
            <person name="Whittaker C.A."/>
            <person name="Kamal M."/>
            <person name="Chang J.L."/>
            <person name="Cuomo C.A."/>
            <person name="Dewar K."/>
            <person name="FitzGerald M.G."/>
            <person name="Kodira C.D."/>
            <person name="Madan A."/>
            <person name="Qin S."/>
            <person name="Yang X."/>
            <person name="Abbasi N."/>
            <person name="Abouelleil A."/>
            <person name="Arachchi H.M."/>
            <person name="Baradarani L."/>
            <person name="Birditt B."/>
            <person name="Bloom S."/>
            <person name="Bloom T."/>
            <person name="Borowsky M.L."/>
            <person name="Burke J."/>
            <person name="Butler J."/>
            <person name="Cook A."/>
            <person name="DeArellano K."/>
            <person name="DeCaprio D."/>
            <person name="Dorris L. III"/>
            <person name="Dors M."/>
            <person name="Eichler E.E."/>
            <person name="Engels R."/>
            <person name="Fahey J."/>
            <person name="Fleetwood P."/>
            <person name="Friedman C."/>
            <person name="Gearin G."/>
            <person name="Hall J.L."/>
            <person name="Hensley G."/>
            <person name="Johnson E."/>
            <person name="Jones C."/>
            <person name="Kamat A."/>
            <person name="Kaur A."/>
            <person name="Locke D.P."/>
            <person name="Madan A."/>
            <person name="Munson G."/>
            <person name="Jaffe D.B."/>
            <person name="Lui A."/>
            <person name="Macdonald P."/>
            <person name="Mauceli E."/>
            <person name="Naylor J.W."/>
            <person name="Nesbitt R."/>
            <person name="Nicol R."/>
            <person name="O'Leary S.B."/>
            <person name="Ratcliffe A."/>
            <person name="Rounsley S."/>
            <person name="She X."/>
            <person name="Sneddon K.M.B."/>
            <person name="Stewart S."/>
            <person name="Sougnez C."/>
            <person name="Stone S.M."/>
            <person name="Topham K."/>
            <person name="Vincent D."/>
            <person name="Wang S."/>
            <person name="Zimmer A.R."/>
            <person name="Birren B.W."/>
            <person name="Hood L."/>
            <person name="Lander E.S."/>
            <person name="Nusbaum C."/>
        </authorList>
    </citation>
    <scope>NUCLEOTIDE SEQUENCE [LARGE SCALE GENOMIC DNA]</scope>
</reference>
<reference key="2">
    <citation type="journal article" date="2001" name="Nat. Genet.">
        <title>Mutations in a new gene encoding a protein of the hair bundle cause non-syndromic deafness at the DFNB16 locus.</title>
        <authorList>
            <person name="Verpy E."/>
            <person name="Masmoudi S."/>
            <person name="Zwaenepoel I."/>
            <person name="Leibovici M."/>
            <person name="Hutchin T.P."/>
            <person name="Del Castillo I."/>
            <person name="Nouaille S."/>
            <person name="Blanchard S."/>
            <person name="Laine S."/>
            <person name="Popot J.-L."/>
            <person name="Moreno F."/>
            <person name="Mueller R.F."/>
            <person name="Petit C."/>
        </authorList>
    </citation>
    <scope>IDENTIFICATION</scope>
    <scope>INVOLVEMENT IN DFNB16</scope>
</reference>
<reference key="3">
    <citation type="journal article" date="2007" name="J. Med. Genet.">
        <title>Sensorineural deafness and male infertility: a contiguous gene deletion syndrome.</title>
        <authorList>
            <person name="Zhang Y."/>
            <person name="Malekpour M."/>
            <person name="Al-Madani N."/>
            <person name="Kahrizi K."/>
            <person name="Zanganeh M."/>
            <person name="Mohseni M."/>
            <person name="Mojahedi F."/>
            <person name="Daneshi A."/>
            <person name="Najmabadi H."/>
            <person name="Smith R.J.H."/>
        </authorList>
    </citation>
    <scope>INVOLVEMENT IN DIS</scope>
</reference>
<name>STRC_HUMAN</name>
<proteinExistence type="evidence at transcript level"/>